<gene>
    <name type="primary">rps8</name>
</gene>
<evidence type="ECO:0000250" key="1"/>
<evidence type="ECO:0000305" key="2"/>
<accession>Q14FC2</accession>
<proteinExistence type="inferred from homology"/>
<dbReference type="EMBL" id="AP008956">
    <property type="protein sequence ID" value="BAE97240.1"/>
    <property type="molecule type" value="Genomic_DNA"/>
</dbReference>
<dbReference type="RefSeq" id="YP_665593.1">
    <property type="nucleotide sequence ID" value="NC_008235.1"/>
</dbReference>
<dbReference type="SMR" id="Q14FC2"/>
<dbReference type="GeneID" id="4178269"/>
<dbReference type="KEGG" id="palz:4178269"/>
<dbReference type="OrthoDB" id="8554at3646"/>
<dbReference type="GO" id="GO:0009507">
    <property type="term" value="C:chloroplast"/>
    <property type="evidence" value="ECO:0007669"/>
    <property type="project" value="UniProtKB-SubCell"/>
</dbReference>
<dbReference type="GO" id="GO:1990904">
    <property type="term" value="C:ribonucleoprotein complex"/>
    <property type="evidence" value="ECO:0007669"/>
    <property type="project" value="UniProtKB-KW"/>
</dbReference>
<dbReference type="GO" id="GO:0005840">
    <property type="term" value="C:ribosome"/>
    <property type="evidence" value="ECO:0007669"/>
    <property type="project" value="UniProtKB-KW"/>
</dbReference>
<dbReference type="GO" id="GO:0019843">
    <property type="term" value="F:rRNA binding"/>
    <property type="evidence" value="ECO:0007669"/>
    <property type="project" value="UniProtKB-UniRule"/>
</dbReference>
<dbReference type="GO" id="GO:0003735">
    <property type="term" value="F:structural constituent of ribosome"/>
    <property type="evidence" value="ECO:0007669"/>
    <property type="project" value="InterPro"/>
</dbReference>
<dbReference type="GO" id="GO:0006412">
    <property type="term" value="P:translation"/>
    <property type="evidence" value="ECO:0007669"/>
    <property type="project" value="UniProtKB-UniRule"/>
</dbReference>
<dbReference type="FunFam" id="3.30.1490.10:FF:000001">
    <property type="entry name" value="30S ribosomal protein S8"/>
    <property type="match status" value="1"/>
</dbReference>
<dbReference type="FunFam" id="3.30.1370.30:FF:000004">
    <property type="entry name" value="30S ribosomal protein S8, chloroplastic"/>
    <property type="match status" value="1"/>
</dbReference>
<dbReference type="Gene3D" id="3.30.1370.30">
    <property type="match status" value="1"/>
</dbReference>
<dbReference type="Gene3D" id="3.30.1490.10">
    <property type="match status" value="1"/>
</dbReference>
<dbReference type="HAMAP" id="MF_01302_B">
    <property type="entry name" value="Ribosomal_uS8_B"/>
    <property type="match status" value="1"/>
</dbReference>
<dbReference type="InterPro" id="IPR000630">
    <property type="entry name" value="Ribosomal_uS8"/>
</dbReference>
<dbReference type="InterPro" id="IPR047863">
    <property type="entry name" value="Ribosomal_uS8_CS"/>
</dbReference>
<dbReference type="InterPro" id="IPR035987">
    <property type="entry name" value="Ribosomal_uS8_sf"/>
</dbReference>
<dbReference type="NCBIfam" id="NF001109">
    <property type="entry name" value="PRK00136.1"/>
    <property type="match status" value="1"/>
</dbReference>
<dbReference type="PANTHER" id="PTHR11758">
    <property type="entry name" value="40S RIBOSOMAL PROTEIN S15A"/>
    <property type="match status" value="1"/>
</dbReference>
<dbReference type="Pfam" id="PF00410">
    <property type="entry name" value="Ribosomal_S8"/>
    <property type="match status" value="1"/>
</dbReference>
<dbReference type="SUPFAM" id="SSF56047">
    <property type="entry name" value="Ribosomal protein S8"/>
    <property type="match status" value="1"/>
</dbReference>
<dbReference type="PROSITE" id="PS00053">
    <property type="entry name" value="RIBOSOMAL_S8"/>
    <property type="match status" value="1"/>
</dbReference>
<keyword id="KW-0150">Chloroplast</keyword>
<keyword id="KW-0934">Plastid</keyword>
<keyword id="KW-0687">Ribonucleoprotein</keyword>
<keyword id="KW-0689">Ribosomal protein</keyword>
<keyword id="KW-0694">RNA-binding</keyword>
<keyword id="KW-0699">rRNA-binding</keyword>
<organism>
    <name type="scientific">Populus alba</name>
    <name type="common">White poplar</name>
    <dbReference type="NCBI Taxonomy" id="43335"/>
    <lineage>
        <taxon>Eukaryota</taxon>
        <taxon>Viridiplantae</taxon>
        <taxon>Streptophyta</taxon>
        <taxon>Embryophyta</taxon>
        <taxon>Tracheophyta</taxon>
        <taxon>Spermatophyta</taxon>
        <taxon>Magnoliopsida</taxon>
        <taxon>eudicotyledons</taxon>
        <taxon>Gunneridae</taxon>
        <taxon>Pentapetalae</taxon>
        <taxon>rosids</taxon>
        <taxon>fabids</taxon>
        <taxon>Malpighiales</taxon>
        <taxon>Salicaceae</taxon>
        <taxon>Saliceae</taxon>
        <taxon>Populus</taxon>
    </lineage>
</organism>
<protein>
    <recommendedName>
        <fullName evidence="2">Small ribosomal subunit protein uS8c</fullName>
    </recommendedName>
    <alternativeName>
        <fullName>30S ribosomal protein S8, chloroplastic</fullName>
    </alternativeName>
</protein>
<name>RR8_POPAL</name>
<geneLocation type="chloroplast"/>
<comment type="function">
    <text evidence="1">One of the primary rRNA binding proteins, it binds directly to 16S rRNA central domain where it helps coordinate assembly of the platform of the 30S subunit.</text>
</comment>
<comment type="subunit">
    <text evidence="1">Part of the 30S ribosomal subunit.</text>
</comment>
<comment type="subcellular location">
    <subcellularLocation>
        <location>Plastid</location>
        <location>Chloroplast</location>
    </subcellularLocation>
</comment>
<comment type="similarity">
    <text evidence="2">Belongs to the universal ribosomal protein uS8 family.</text>
</comment>
<reference key="1">
    <citation type="submission" date="2005-03" db="EMBL/GenBank/DDBJ databases">
        <title>Complete structure of the chloroplast genome of Populus alba.</title>
        <authorList>
            <person name="Okumura S."/>
            <person name="Yamashita A."/>
            <person name="Kanamoto H."/>
            <person name="Hattori M."/>
            <person name="Takase H."/>
            <person name="Tomizawa K."/>
        </authorList>
    </citation>
    <scope>NUCLEOTIDE SEQUENCE [LARGE SCALE GENOMIC DNA]</scope>
</reference>
<feature type="chain" id="PRO_0000276730" description="Small ribosomal subunit protein uS8c">
    <location>
        <begin position="1"/>
        <end position="134"/>
    </location>
</feature>
<sequence>MGRDTLADIITSIRNADMDRKGTVRIPSTNITENIIKILLREGFIENVRKHQEGNFFFFALTLRHRRNRKGPCRTSLNLKRISRPGLRIYSNYQQIPRILGGMGIVILSTSRGIMTDREARLERIGGEILCYIW</sequence>